<accession>Q7YQL6</accession>
<organism>
    <name type="scientific">Pan troglodytes</name>
    <name type="common">Chimpanzee</name>
    <dbReference type="NCBI Taxonomy" id="9598"/>
    <lineage>
        <taxon>Eukaryota</taxon>
        <taxon>Metazoa</taxon>
        <taxon>Chordata</taxon>
        <taxon>Craniata</taxon>
        <taxon>Vertebrata</taxon>
        <taxon>Euteleostomi</taxon>
        <taxon>Mammalia</taxon>
        <taxon>Eutheria</taxon>
        <taxon>Euarchontoglires</taxon>
        <taxon>Primates</taxon>
        <taxon>Haplorrhini</taxon>
        <taxon>Catarrhini</taxon>
        <taxon>Hominidae</taxon>
        <taxon>Pan</taxon>
    </lineage>
</organism>
<keyword id="KW-0966">Cell projection</keyword>
<keyword id="KW-0963">Cytoplasm</keyword>
<keyword id="KW-0254">Endocytosis</keyword>
<keyword id="KW-0343">GTPase activation</keyword>
<keyword id="KW-0524">Neurogenesis</keyword>
<keyword id="KW-1185">Reference proteome</keyword>
<keyword id="KW-0770">Synapse</keyword>
<gene>
    <name type="primary">OPHN1</name>
</gene>
<dbReference type="EMBL" id="AB102657">
    <property type="protein sequence ID" value="BAC81126.1"/>
    <property type="molecule type" value="mRNA"/>
</dbReference>
<dbReference type="RefSeq" id="NP_001009021.1">
    <property type="nucleotide sequence ID" value="NM_001009021.1"/>
</dbReference>
<dbReference type="RefSeq" id="XP_009437484.1">
    <property type="nucleotide sequence ID" value="XM_009439209.5"/>
</dbReference>
<dbReference type="RefSeq" id="XP_009437485.1">
    <property type="nucleotide sequence ID" value="XM_009439210.5"/>
</dbReference>
<dbReference type="SMR" id="Q7YQL6"/>
<dbReference type="FunCoup" id="Q7YQL6">
    <property type="interactions" value="885"/>
</dbReference>
<dbReference type="STRING" id="9598.ENSPTRP00000088982"/>
<dbReference type="PaxDb" id="9598-ENSPTRP00000037773"/>
<dbReference type="Ensembl" id="ENSPTRT00000040885.6">
    <property type="protein sequence ID" value="ENSPTRP00000037773.5"/>
    <property type="gene ID" value="ENSPTRG00000021979.7"/>
</dbReference>
<dbReference type="GeneID" id="449628"/>
<dbReference type="KEGG" id="ptr:449628"/>
<dbReference type="CTD" id="4983"/>
<dbReference type="VGNC" id="VGNC:1512">
    <property type="gene designation" value="OPHN1"/>
</dbReference>
<dbReference type="eggNOG" id="KOG1451">
    <property type="taxonomic scope" value="Eukaryota"/>
</dbReference>
<dbReference type="GeneTree" id="ENSGT00940000160157"/>
<dbReference type="HOGENOM" id="CLU_011532_2_1_1"/>
<dbReference type="InParanoid" id="Q7YQL6"/>
<dbReference type="OrthoDB" id="6378at9604"/>
<dbReference type="TreeFam" id="TF316851"/>
<dbReference type="Proteomes" id="UP000002277">
    <property type="component" value="Chromosome X"/>
</dbReference>
<dbReference type="Bgee" id="ENSPTRG00000021979">
    <property type="expression patterns" value="Expressed in hindlimb stylopod muscle and 21 other cell types or tissues"/>
</dbReference>
<dbReference type="GO" id="GO:0015629">
    <property type="term" value="C:actin cytoskeleton"/>
    <property type="evidence" value="ECO:0000318"/>
    <property type="project" value="GO_Central"/>
</dbReference>
<dbReference type="GO" id="GO:0005737">
    <property type="term" value="C:cytoplasm"/>
    <property type="evidence" value="ECO:0000318"/>
    <property type="project" value="GO_Central"/>
</dbReference>
<dbReference type="GO" id="GO:0043197">
    <property type="term" value="C:dendritic spine"/>
    <property type="evidence" value="ECO:0000318"/>
    <property type="project" value="GO_Central"/>
</dbReference>
<dbReference type="GO" id="GO:0043195">
    <property type="term" value="C:terminal bouton"/>
    <property type="evidence" value="ECO:0000318"/>
    <property type="project" value="GO_Central"/>
</dbReference>
<dbReference type="GO" id="GO:0005096">
    <property type="term" value="F:GTPase activator activity"/>
    <property type="evidence" value="ECO:0000318"/>
    <property type="project" value="GO_Central"/>
</dbReference>
<dbReference type="GO" id="GO:0030036">
    <property type="term" value="P:actin cytoskeleton organization"/>
    <property type="evidence" value="ECO:0000318"/>
    <property type="project" value="GO_Central"/>
</dbReference>
<dbReference type="GO" id="GO:0034329">
    <property type="term" value="P:cell junction assembly"/>
    <property type="evidence" value="ECO:0000250"/>
    <property type="project" value="UniProtKB"/>
</dbReference>
<dbReference type="GO" id="GO:0045198">
    <property type="term" value="P:establishment of epithelial cell apical/basal polarity"/>
    <property type="evidence" value="ECO:0000250"/>
    <property type="project" value="UniProtKB"/>
</dbReference>
<dbReference type="GO" id="GO:1901799">
    <property type="term" value="P:negative regulation of proteasomal protein catabolic process"/>
    <property type="evidence" value="ECO:0000318"/>
    <property type="project" value="GO_Central"/>
</dbReference>
<dbReference type="GO" id="GO:0007399">
    <property type="term" value="P:nervous system development"/>
    <property type="evidence" value="ECO:0007669"/>
    <property type="project" value="UniProtKB-KW"/>
</dbReference>
<dbReference type="GO" id="GO:0030100">
    <property type="term" value="P:regulation of endocytosis"/>
    <property type="evidence" value="ECO:0000318"/>
    <property type="project" value="GO_Central"/>
</dbReference>
<dbReference type="GO" id="GO:0051966">
    <property type="term" value="P:regulation of synaptic transmission, glutamatergic"/>
    <property type="evidence" value="ECO:0000318"/>
    <property type="project" value="GO_Central"/>
</dbReference>
<dbReference type="GO" id="GO:0007165">
    <property type="term" value="P:signal transduction"/>
    <property type="evidence" value="ECO:0007669"/>
    <property type="project" value="InterPro"/>
</dbReference>
<dbReference type="GO" id="GO:0048488">
    <property type="term" value="P:synaptic vesicle endocytosis"/>
    <property type="evidence" value="ECO:0000318"/>
    <property type="project" value="GO_Central"/>
</dbReference>
<dbReference type="CDD" id="cd01249">
    <property type="entry name" value="BAR-PH_GRAF_family"/>
    <property type="match status" value="1"/>
</dbReference>
<dbReference type="CDD" id="cd07633">
    <property type="entry name" value="BAR_OPHN1"/>
    <property type="match status" value="1"/>
</dbReference>
<dbReference type="CDD" id="cd04374">
    <property type="entry name" value="RhoGAP_Graf"/>
    <property type="match status" value="1"/>
</dbReference>
<dbReference type="FunFam" id="2.30.29.30:FF:000183">
    <property type="entry name" value="Oligophrenin 1"/>
    <property type="match status" value="1"/>
</dbReference>
<dbReference type="FunFam" id="1.20.1270.60:FF:000001">
    <property type="entry name" value="Rho GTPase-activating protein 26"/>
    <property type="match status" value="1"/>
</dbReference>
<dbReference type="FunFam" id="1.10.555.10:FF:000008">
    <property type="entry name" value="Rho GTPase-activating protein 42"/>
    <property type="match status" value="1"/>
</dbReference>
<dbReference type="Gene3D" id="1.20.1270.60">
    <property type="entry name" value="Arfaptin homology (AH) domain/BAR domain"/>
    <property type="match status" value="1"/>
</dbReference>
<dbReference type="Gene3D" id="2.30.29.30">
    <property type="entry name" value="Pleckstrin-homology domain (PH domain)/Phosphotyrosine-binding domain (PTB)"/>
    <property type="match status" value="1"/>
</dbReference>
<dbReference type="Gene3D" id="1.10.555.10">
    <property type="entry name" value="Rho GTPase activation protein"/>
    <property type="match status" value="1"/>
</dbReference>
<dbReference type="InterPro" id="IPR027267">
    <property type="entry name" value="AH/BAR_dom_sf"/>
</dbReference>
<dbReference type="InterPro" id="IPR004148">
    <property type="entry name" value="BAR_dom"/>
</dbReference>
<dbReference type="InterPro" id="IPR047234">
    <property type="entry name" value="GRAF_fam"/>
</dbReference>
<dbReference type="InterPro" id="IPR047267">
    <property type="entry name" value="OPHN1_BAR"/>
</dbReference>
<dbReference type="InterPro" id="IPR011993">
    <property type="entry name" value="PH-like_dom_sf"/>
</dbReference>
<dbReference type="InterPro" id="IPR001849">
    <property type="entry name" value="PH_domain"/>
</dbReference>
<dbReference type="InterPro" id="IPR047225">
    <property type="entry name" value="PH_GRAF"/>
</dbReference>
<dbReference type="InterPro" id="IPR008936">
    <property type="entry name" value="Rho_GTPase_activation_prot"/>
</dbReference>
<dbReference type="InterPro" id="IPR000198">
    <property type="entry name" value="RhoGAP_dom"/>
</dbReference>
<dbReference type="PANTHER" id="PTHR12552">
    <property type="entry name" value="OLIGOPHRENIN 1"/>
    <property type="match status" value="1"/>
</dbReference>
<dbReference type="PANTHER" id="PTHR12552:SF2">
    <property type="entry name" value="OLIGOPHRENIN-1"/>
    <property type="match status" value="1"/>
</dbReference>
<dbReference type="Pfam" id="PF16746">
    <property type="entry name" value="BAR_3"/>
    <property type="match status" value="1"/>
</dbReference>
<dbReference type="Pfam" id="PF00169">
    <property type="entry name" value="PH"/>
    <property type="match status" value="1"/>
</dbReference>
<dbReference type="Pfam" id="PF00620">
    <property type="entry name" value="RhoGAP"/>
    <property type="match status" value="1"/>
</dbReference>
<dbReference type="SMART" id="SM00233">
    <property type="entry name" value="PH"/>
    <property type="match status" value="1"/>
</dbReference>
<dbReference type="SMART" id="SM00324">
    <property type="entry name" value="RhoGAP"/>
    <property type="match status" value="1"/>
</dbReference>
<dbReference type="SUPFAM" id="SSF103657">
    <property type="entry name" value="BAR/IMD domain-like"/>
    <property type="match status" value="1"/>
</dbReference>
<dbReference type="SUPFAM" id="SSF48350">
    <property type="entry name" value="GTPase activation domain, GAP"/>
    <property type="match status" value="1"/>
</dbReference>
<dbReference type="SUPFAM" id="SSF50729">
    <property type="entry name" value="PH domain-like"/>
    <property type="match status" value="1"/>
</dbReference>
<dbReference type="PROSITE" id="PS50003">
    <property type="entry name" value="PH_DOMAIN"/>
    <property type="match status" value="1"/>
</dbReference>
<dbReference type="PROSITE" id="PS50238">
    <property type="entry name" value="RHOGAP"/>
    <property type="match status" value="1"/>
</dbReference>
<comment type="function">
    <text evidence="1">Stimulates GTP hydrolysis of members of the Rho family. Its action on RHOA activity and signaling is implicated in growth and stabilization of dendritic spines, and therefore in synaptic function. Critical for the stabilization of AMPA receptors at postsynaptic sites. Critical for the regulation of synaptic vesicle endocytosis at pre-synaptic terminals. Required for the localization of NR1D1 to dendrites, can suppress its repressor activity and protect it from proteasomal degradation (By similarity).</text>
</comment>
<comment type="subunit">
    <text evidence="1">Interacts with HOMER1. Interacts with AMPA receptor complexes. Interacts with SH3GL2 (endophilin-A1) (By similarity). Interacts (via C-terminus) with NR1D1 (By similarity).</text>
</comment>
<comment type="subcellular location">
    <subcellularLocation>
        <location evidence="2">Postsynapse</location>
    </subcellularLocation>
    <subcellularLocation>
        <location evidence="2">Presynapse</location>
    </subcellularLocation>
    <subcellularLocation>
        <location evidence="2">Cell projection</location>
        <location evidence="2">Axon</location>
    </subcellularLocation>
    <subcellularLocation>
        <location evidence="2">Cell projection</location>
        <location evidence="2">Dendritic spine</location>
    </subcellularLocation>
    <subcellularLocation>
        <location evidence="3">Cell projection</location>
        <location evidence="3">Dendrite</location>
    </subcellularLocation>
    <subcellularLocation>
        <location evidence="3">Cytoplasm</location>
    </subcellularLocation>
</comment>
<protein>
    <recommendedName>
        <fullName>Oligophrenin-1</fullName>
    </recommendedName>
</protein>
<reference key="1">
    <citation type="journal article" date="2003" name="Mol. Biol. Evol.">
        <title>Gene diversity patterns at 10 X-chromosomal loci in humans and chimpanzees.</title>
        <authorList>
            <person name="Kitano T."/>
            <person name="Schwarz C."/>
            <person name="Nickel B."/>
            <person name="Paeaebo S."/>
        </authorList>
    </citation>
    <scope>NUCLEOTIDE SEQUENCE [MRNA]</scope>
</reference>
<sequence length="802" mass="91615">MGHPPLEFSDCYLDSPDFRERLKCYEQELERTNKFIKDVIKDGNALISAMRNYSSAVQKFSQTLQSFQFDFIGDTLTDDEINIAESFKEFAELLNEVENERMMMVHNASDLLIKPLENFRKEQIGFTKERKKKFEKDGERFYSLLDRHLHLSSKKKESQLQEADLQVDKERHNFFESSLDYVYQIQEVQESKKFNIVEPVLAFLHSLFISNSLTVELTQDFLPYKQQLQLSLQNTRNHFSSTREEMEELKKRMKEAPQTCKLPGQPTIEGYLYTQEKWALGISWVKYYCQYEKETKTLTMTPMEQKPGAKQGPLDLTLKYCVRRKTESIDKRFCFDIETNERPGTITLQALSEANRRLWMEAMDGKEPIYHSPITKQQEMELNEVGFKFVRKCINIIETKGIKTEGLYRTVGSNIQVQKLLNAFFDPKCPGDVDFHNSDWDIKTITSSLKFYLRNLSEPVMTYRLHKELVSAAKSDNLDYRLGAIHSLVYKLPEKNREMLELLIRHLVNVCEHSKENLMTPSNMGVIFGPTLMRAQEDTVAAMMNIKFQNIVVEILIEHFGKIYLGPPEESAAPPVPPPRVTARRHKPITISKRLLRERTVFYTSSLDESEDEIQHQTPNGTITSSIEPPKPPQHPKLPIQRSGETDPGRKSPSRPISDGKLEPCPEVDVGKLVSRLQDGGTKITPKATNGPMPGSGPTKTPSFHIKRPAPRPLAHHKEGDADSFSKVRPPGEKPTIIRPPVRPPDPPCRAATPQKPEPKPDIVAGNAGEITSSVVASRTRFFETASRKTGSSQGRLPGDES</sequence>
<evidence type="ECO:0000250" key="1"/>
<evidence type="ECO:0000250" key="2">
    <source>
        <dbReference type="UniProtKB" id="P0CAX5"/>
    </source>
</evidence>
<evidence type="ECO:0000250" key="3">
    <source>
        <dbReference type="UniProtKB" id="Q99J31"/>
    </source>
</evidence>
<evidence type="ECO:0000255" key="4">
    <source>
        <dbReference type="PROSITE-ProRule" id="PRU00145"/>
    </source>
</evidence>
<evidence type="ECO:0000255" key="5">
    <source>
        <dbReference type="PROSITE-ProRule" id="PRU00172"/>
    </source>
</evidence>
<evidence type="ECO:0000256" key="6">
    <source>
        <dbReference type="SAM" id="MobiDB-lite"/>
    </source>
</evidence>
<feature type="chain" id="PRO_0000056762" description="Oligophrenin-1">
    <location>
        <begin position="1"/>
        <end position="802"/>
    </location>
</feature>
<feature type="domain" description="PH" evidence="4">
    <location>
        <begin position="265"/>
        <end position="368"/>
    </location>
</feature>
<feature type="domain" description="Rho-GAP" evidence="5">
    <location>
        <begin position="380"/>
        <end position="564"/>
    </location>
</feature>
<feature type="region of interest" description="Disordered" evidence="6">
    <location>
        <begin position="569"/>
        <end position="589"/>
    </location>
</feature>
<feature type="region of interest" description="Disordered" evidence="6">
    <location>
        <begin position="607"/>
        <end position="770"/>
    </location>
</feature>
<feature type="region of interest" description="Disordered" evidence="6">
    <location>
        <begin position="783"/>
        <end position="802"/>
    </location>
</feature>
<feature type="compositionally biased region" description="Polar residues" evidence="6">
    <location>
        <begin position="616"/>
        <end position="627"/>
    </location>
</feature>
<feature type="compositionally biased region" description="Basic and acidic residues" evidence="6">
    <location>
        <begin position="716"/>
        <end position="732"/>
    </location>
</feature>
<feature type="site" description="Arginine finger; crucial for GTP hydrolysis by stabilizing the transition state" evidence="5">
    <location>
        <position position="409"/>
    </location>
</feature>
<name>OPHN1_PANTR</name>
<proteinExistence type="evidence at transcript level"/>